<dbReference type="EMBL" id="AAFI02000171">
    <property type="protein sequence ID" value="EAS66825.1"/>
    <property type="molecule type" value="Genomic_DNA"/>
</dbReference>
<dbReference type="RefSeq" id="XP_001134508.1">
    <property type="nucleotide sequence ID" value="XM_001134508.1"/>
</dbReference>
<dbReference type="SMR" id="Q1ZXB7"/>
<dbReference type="FunCoup" id="Q1ZXB7">
    <property type="interactions" value="3"/>
</dbReference>
<dbReference type="STRING" id="44689.Q1ZXB7"/>
<dbReference type="PaxDb" id="44689-DDB0233211"/>
<dbReference type="EnsemblProtists" id="EAS66825">
    <property type="protein sequence ID" value="EAS66825"/>
    <property type="gene ID" value="DDB_G0290791"/>
</dbReference>
<dbReference type="GeneID" id="8627835"/>
<dbReference type="KEGG" id="ddi:DDB_G0290791"/>
<dbReference type="dictyBase" id="DDB_G0290791">
    <property type="gene designation" value="rabK2"/>
</dbReference>
<dbReference type="VEuPathDB" id="AmoebaDB:DDB_G0290791"/>
<dbReference type="eggNOG" id="KOG0394">
    <property type="taxonomic scope" value="Eukaryota"/>
</dbReference>
<dbReference type="HOGENOM" id="CLU_1771538_0_0_1"/>
<dbReference type="InParanoid" id="Q1ZXB7"/>
<dbReference type="PhylomeDB" id="Q1ZXB7"/>
<dbReference type="Reactome" id="R-DDI-6798695">
    <property type="pathway name" value="Neutrophil degranulation"/>
</dbReference>
<dbReference type="Reactome" id="R-DDI-8854214">
    <property type="pathway name" value="TBC/RABGAPs"/>
</dbReference>
<dbReference type="Reactome" id="R-DDI-8873719">
    <property type="pathway name" value="RAB geranylgeranylation"/>
</dbReference>
<dbReference type="Reactome" id="R-DDI-8876198">
    <property type="pathway name" value="RAB GEFs exchange GTP for GDP on RABs"/>
</dbReference>
<dbReference type="Reactome" id="R-DDI-9706019">
    <property type="pathway name" value="RHOBTB3 ATPase cycle"/>
</dbReference>
<dbReference type="PRO" id="PR:Q1ZXB7"/>
<dbReference type="Proteomes" id="UP000002195">
    <property type="component" value="Chromosome 5"/>
</dbReference>
<dbReference type="GO" id="GO:0005770">
    <property type="term" value="C:late endosome"/>
    <property type="evidence" value="ECO:0000318"/>
    <property type="project" value="GO_Central"/>
</dbReference>
<dbReference type="GO" id="GO:0005764">
    <property type="term" value="C:lysosome"/>
    <property type="evidence" value="ECO:0000318"/>
    <property type="project" value="GO_Central"/>
</dbReference>
<dbReference type="GO" id="GO:0045335">
    <property type="term" value="C:phagocytic vesicle"/>
    <property type="evidence" value="ECO:0000318"/>
    <property type="project" value="GO_Central"/>
</dbReference>
<dbReference type="GO" id="GO:0005886">
    <property type="term" value="C:plasma membrane"/>
    <property type="evidence" value="ECO:0007669"/>
    <property type="project" value="UniProtKB-SubCell"/>
</dbReference>
<dbReference type="GO" id="GO:0005525">
    <property type="term" value="F:GTP binding"/>
    <property type="evidence" value="ECO:0007669"/>
    <property type="project" value="UniProtKB-KW"/>
</dbReference>
<dbReference type="GO" id="GO:0003924">
    <property type="term" value="F:GTPase activity"/>
    <property type="evidence" value="ECO:0007669"/>
    <property type="project" value="InterPro"/>
</dbReference>
<dbReference type="GO" id="GO:0090385">
    <property type="term" value="P:phagosome-lysosome fusion"/>
    <property type="evidence" value="ECO:0000318"/>
    <property type="project" value="GO_Central"/>
</dbReference>
<dbReference type="Gene3D" id="3.40.50.300">
    <property type="entry name" value="P-loop containing nucleotide triphosphate hydrolases"/>
    <property type="match status" value="1"/>
</dbReference>
<dbReference type="InterPro" id="IPR027417">
    <property type="entry name" value="P-loop_NTPase"/>
</dbReference>
<dbReference type="InterPro" id="IPR001806">
    <property type="entry name" value="Small_GTPase"/>
</dbReference>
<dbReference type="PANTHER" id="PTHR47981">
    <property type="entry name" value="RAB FAMILY"/>
    <property type="match status" value="1"/>
</dbReference>
<dbReference type="PANTHER" id="PTHR47981:SF20">
    <property type="entry name" value="RAS-RELATED PROTEIN RAB-7A"/>
    <property type="match status" value="1"/>
</dbReference>
<dbReference type="Pfam" id="PF00071">
    <property type="entry name" value="Ras"/>
    <property type="match status" value="1"/>
</dbReference>
<dbReference type="PRINTS" id="PR00449">
    <property type="entry name" value="RASTRNSFRMNG"/>
</dbReference>
<dbReference type="SMART" id="SM00175">
    <property type="entry name" value="RAB"/>
    <property type="match status" value="1"/>
</dbReference>
<dbReference type="SMART" id="SM00173">
    <property type="entry name" value="RAS"/>
    <property type="match status" value="1"/>
</dbReference>
<dbReference type="SMART" id="SM00174">
    <property type="entry name" value="RHO"/>
    <property type="match status" value="1"/>
</dbReference>
<dbReference type="SUPFAM" id="SSF52540">
    <property type="entry name" value="P-loop containing nucleoside triphosphate hydrolases"/>
    <property type="match status" value="1"/>
</dbReference>
<dbReference type="PROSITE" id="PS51419">
    <property type="entry name" value="RAB"/>
    <property type="match status" value="1"/>
</dbReference>
<keyword id="KW-1003">Cell membrane</keyword>
<keyword id="KW-0342">GTP-binding</keyword>
<keyword id="KW-0449">Lipoprotein</keyword>
<keyword id="KW-0472">Membrane</keyword>
<keyword id="KW-0547">Nucleotide-binding</keyword>
<keyword id="KW-0636">Prenylation</keyword>
<keyword id="KW-1185">Reference proteome</keyword>
<accession>Q1ZXB7</accession>
<gene>
    <name type="primary">rabK2</name>
    <name type="ORF">DDB_G0290791</name>
</gene>
<sequence>MDNNNNKKLFNTHGSAFDDSKIYFRDVDCGVLCFNIHNEQSFNNLNHWMSLFNENVPFVLIGTKSDIERTEKSISKERIEQWCKQIEDQGIVKEKIHYFETSAKLSTNIIEAYETIVKIALNQYKNKQKNSINISIEPEKPKGICWW</sequence>
<feature type="chain" id="PRO_0000332758" description="Ras-related protein RabK2">
    <location>
        <begin position="1"/>
        <end position="147"/>
    </location>
</feature>
<feature type="binding site" evidence="1">
    <location>
        <begin position="11"/>
        <end position="15"/>
    </location>
    <ligand>
        <name>GTP</name>
        <dbReference type="ChEBI" id="CHEBI:37565"/>
    </ligand>
</feature>
<feature type="binding site" evidence="1">
    <location>
        <begin position="63"/>
        <end position="66"/>
    </location>
    <ligand>
        <name>GTP</name>
        <dbReference type="ChEBI" id="CHEBI:37565"/>
    </ligand>
</feature>
<feature type="lipid moiety-binding region" description="S-geranylgeranyl cysteine" evidence="1">
    <location>
        <position position="145"/>
    </location>
</feature>
<organism>
    <name type="scientific">Dictyostelium discoideum</name>
    <name type="common">Social amoeba</name>
    <dbReference type="NCBI Taxonomy" id="44689"/>
    <lineage>
        <taxon>Eukaryota</taxon>
        <taxon>Amoebozoa</taxon>
        <taxon>Evosea</taxon>
        <taxon>Eumycetozoa</taxon>
        <taxon>Dictyostelia</taxon>
        <taxon>Dictyosteliales</taxon>
        <taxon>Dictyosteliaceae</taxon>
        <taxon>Dictyostelium</taxon>
    </lineage>
</organism>
<protein>
    <recommendedName>
        <fullName>Ras-related protein RabK2</fullName>
    </recommendedName>
</protein>
<evidence type="ECO:0000250" key="1"/>
<evidence type="ECO:0000305" key="2"/>
<reference key="1">
    <citation type="journal article" date="2005" name="Nature">
        <title>The genome of the social amoeba Dictyostelium discoideum.</title>
        <authorList>
            <person name="Eichinger L."/>
            <person name="Pachebat J.A."/>
            <person name="Gloeckner G."/>
            <person name="Rajandream M.A."/>
            <person name="Sucgang R."/>
            <person name="Berriman M."/>
            <person name="Song J."/>
            <person name="Olsen R."/>
            <person name="Szafranski K."/>
            <person name="Xu Q."/>
            <person name="Tunggal B."/>
            <person name="Kummerfeld S."/>
            <person name="Madera M."/>
            <person name="Konfortov B.A."/>
            <person name="Rivero F."/>
            <person name="Bankier A.T."/>
            <person name="Lehmann R."/>
            <person name="Hamlin N."/>
            <person name="Davies R."/>
            <person name="Gaudet P."/>
            <person name="Fey P."/>
            <person name="Pilcher K."/>
            <person name="Chen G."/>
            <person name="Saunders D."/>
            <person name="Sodergren E.J."/>
            <person name="Davis P."/>
            <person name="Kerhornou A."/>
            <person name="Nie X."/>
            <person name="Hall N."/>
            <person name="Anjard C."/>
            <person name="Hemphill L."/>
            <person name="Bason N."/>
            <person name="Farbrother P."/>
            <person name="Desany B."/>
            <person name="Just E."/>
            <person name="Morio T."/>
            <person name="Rost R."/>
            <person name="Churcher C.M."/>
            <person name="Cooper J."/>
            <person name="Haydock S."/>
            <person name="van Driessche N."/>
            <person name="Cronin A."/>
            <person name="Goodhead I."/>
            <person name="Muzny D.M."/>
            <person name="Mourier T."/>
            <person name="Pain A."/>
            <person name="Lu M."/>
            <person name="Harper D."/>
            <person name="Lindsay R."/>
            <person name="Hauser H."/>
            <person name="James K.D."/>
            <person name="Quiles M."/>
            <person name="Madan Babu M."/>
            <person name="Saito T."/>
            <person name="Buchrieser C."/>
            <person name="Wardroper A."/>
            <person name="Felder M."/>
            <person name="Thangavelu M."/>
            <person name="Johnson D."/>
            <person name="Knights A."/>
            <person name="Loulseged H."/>
            <person name="Mungall K.L."/>
            <person name="Oliver K."/>
            <person name="Price C."/>
            <person name="Quail M.A."/>
            <person name="Urushihara H."/>
            <person name="Hernandez J."/>
            <person name="Rabbinowitsch E."/>
            <person name="Steffen D."/>
            <person name="Sanders M."/>
            <person name="Ma J."/>
            <person name="Kohara Y."/>
            <person name="Sharp S."/>
            <person name="Simmonds M.N."/>
            <person name="Spiegler S."/>
            <person name="Tivey A."/>
            <person name="Sugano S."/>
            <person name="White B."/>
            <person name="Walker D."/>
            <person name="Woodward J.R."/>
            <person name="Winckler T."/>
            <person name="Tanaka Y."/>
            <person name="Shaulsky G."/>
            <person name="Schleicher M."/>
            <person name="Weinstock G.M."/>
            <person name="Rosenthal A."/>
            <person name="Cox E.C."/>
            <person name="Chisholm R.L."/>
            <person name="Gibbs R.A."/>
            <person name="Loomis W.F."/>
            <person name="Platzer M."/>
            <person name="Kay R.R."/>
            <person name="Williams J.G."/>
            <person name="Dear P.H."/>
            <person name="Noegel A.A."/>
            <person name="Barrell B.G."/>
            <person name="Kuspa A."/>
        </authorList>
    </citation>
    <scope>NUCLEOTIDE SEQUENCE [LARGE SCALE GENOMIC DNA]</scope>
    <source>
        <strain>AX4</strain>
    </source>
</reference>
<proteinExistence type="inferred from homology"/>
<name>RABK2_DICDI</name>
<comment type="subcellular location">
    <subcellularLocation>
        <location evidence="2">Cell membrane</location>
        <topology evidence="2">Lipid-anchor</topology>
        <orientation evidence="2">Cytoplasmic side</orientation>
    </subcellularLocation>
</comment>
<comment type="similarity">
    <text evidence="2">Belongs to the small GTPase superfamily. Rab family.</text>
</comment>